<feature type="chain" id="PRO_0000338925" description="Translation initiation factor IF-1">
    <location>
        <begin position="1"/>
        <end position="72"/>
    </location>
</feature>
<feature type="domain" description="S1-like" evidence="1">
    <location>
        <begin position="1"/>
        <end position="72"/>
    </location>
</feature>
<gene>
    <name evidence="1" type="primary">infA</name>
    <name type="ordered locus">SFV_0875</name>
</gene>
<organism>
    <name type="scientific">Shigella flexneri serotype 5b (strain 8401)</name>
    <dbReference type="NCBI Taxonomy" id="373384"/>
    <lineage>
        <taxon>Bacteria</taxon>
        <taxon>Pseudomonadati</taxon>
        <taxon>Pseudomonadota</taxon>
        <taxon>Gammaproteobacteria</taxon>
        <taxon>Enterobacterales</taxon>
        <taxon>Enterobacteriaceae</taxon>
        <taxon>Shigella</taxon>
    </lineage>
</organism>
<protein>
    <recommendedName>
        <fullName evidence="1">Translation initiation factor IF-1</fullName>
    </recommendedName>
</protein>
<reference key="1">
    <citation type="journal article" date="2006" name="BMC Genomics">
        <title>Complete genome sequence of Shigella flexneri 5b and comparison with Shigella flexneri 2a.</title>
        <authorList>
            <person name="Nie H."/>
            <person name="Yang F."/>
            <person name="Zhang X."/>
            <person name="Yang J."/>
            <person name="Chen L."/>
            <person name="Wang J."/>
            <person name="Xiong Z."/>
            <person name="Peng J."/>
            <person name="Sun L."/>
            <person name="Dong J."/>
            <person name="Xue Y."/>
            <person name="Xu X."/>
            <person name="Chen S."/>
            <person name="Yao Z."/>
            <person name="Shen Y."/>
            <person name="Jin Q."/>
        </authorList>
    </citation>
    <scope>NUCLEOTIDE SEQUENCE [LARGE SCALE GENOMIC DNA]</scope>
    <source>
        <strain>8401</strain>
    </source>
</reference>
<evidence type="ECO:0000255" key="1">
    <source>
        <dbReference type="HAMAP-Rule" id="MF_00075"/>
    </source>
</evidence>
<accession>Q0T8P2</accession>
<dbReference type="EMBL" id="CP000266">
    <property type="protein sequence ID" value="ABF03100.1"/>
    <property type="molecule type" value="Genomic_DNA"/>
</dbReference>
<dbReference type="RefSeq" id="WP_001040187.1">
    <property type="nucleotide sequence ID" value="NC_008258.1"/>
</dbReference>
<dbReference type="SMR" id="Q0T8P2"/>
<dbReference type="GeneID" id="93776536"/>
<dbReference type="KEGG" id="sfv:SFV_0875"/>
<dbReference type="HOGENOM" id="CLU_151267_1_0_6"/>
<dbReference type="Proteomes" id="UP000000659">
    <property type="component" value="Chromosome"/>
</dbReference>
<dbReference type="GO" id="GO:0005829">
    <property type="term" value="C:cytosol"/>
    <property type="evidence" value="ECO:0007669"/>
    <property type="project" value="TreeGrafter"/>
</dbReference>
<dbReference type="GO" id="GO:0043022">
    <property type="term" value="F:ribosome binding"/>
    <property type="evidence" value="ECO:0007669"/>
    <property type="project" value="UniProtKB-UniRule"/>
</dbReference>
<dbReference type="GO" id="GO:0019843">
    <property type="term" value="F:rRNA binding"/>
    <property type="evidence" value="ECO:0007669"/>
    <property type="project" value="UniProtKB-UniRule"/>
</dbReference>
<dbReference type="GO" id="GO:0003743">
    <property type="term" value="F:translation initiation factor activity"/>
    <property type="evidence" value="ECO:0007669"/>
    <property type="project" value="UniProtKB-UniRule"/>
</dbReference>
<dbReference type="CDD" id="cd04451">
    <property type="entry name" value="S1_IF1"/>
    <property type="match status" value="1"/>
</dbReference>
<dbReference type="FunFam" id="2.40.50.140:FF:000002">
    <property type="entry name" value="Translation initiation factor IF-1"/>
    <property type="match status" value="1"/>
</dbReference>
<dbReference type="Gene3D" id="2.40.50.140">
    <property type="entry name" value="Nucleic acid-binding proteins"/>
    <property type="match status" value="1"/>
</dbReference>
<dbReference type="HAMAP" id="MF_00075">
    <property type="entry name" value="IF_1"/>
    <property type="match status" value="1"/>
</dbReference>
<dbReference type="InterPro" id="IPR012340">
    <property type="entry name" value="NA-bd_OB-fold"/>
</dbReference>
<dbReference type="InterPro" id="IPR006196">
    <property type="entry name" value="RNA-binding_domain_S1_IF1"/>
</dbReference>
<dbReference type="InterPro" id="IPR003029">
    <property type="entry name" value="S1_domain"/>
</dbReference>
<dbReference type="InterPro" id="IPR004368">
    <property type="entry name" value="TIF_IF1"/>
</dbReference>
<dbReference type="NCBIfam" id="TIGR00008">
    <property type="entry name" value="infA"/>
    <property type="match status" value="1"/>
</dbReference>
<dbReference type="PANTHER" id="PTHR33370">
    <property type="entry name" value="TRANSLATION INITIATION FACTOR IF-1, CHLOROPLASTIC"/>
    <property type="match status" value="1"/>
</dbReference>
<dbReference type="PANTHER" id="PTHR33370:SF1">
    <property type="entry name" value="TRANSLATION INITIATION FACTOR IF-1, CHLOROPLASTIC"/>
    <property type="match status" value="1"/>
</dbReference>
<dbReference type="Pfam" id="PF01176">
    <property type="entry name" value="eIF-1a"/>
    <property type="match status" value="1"/>
</dbReference>
<dbReference type="SMART" id="SM00316">
    <property type="entry name" value="S1"/>
    <property type="match status" value="1"/>
</dbReference>
<dbReference type="SUPFAM" id="SSF50249">
    <property type="entry name" value="Nucleic acid-binding proteins"/>
    <property type="match status" value="1"/>
</dbReference>
<dbReference type="PROSITE" id="PS50832">
    <property type="entry name" value="S1_IF1_TYPE"/>
    <property type="match status" value="1"/>
</dbReference>
<keyword id="KW-0963">Cytoplasm</keyword>
<keyword id="KW-0396">Initiation factor</keyword>
<keyword id="KW-0648">Protein biosynthesis</keyword>
<keyword id="KW-0694">RNA-binding</keyword>
<keyword id="KW-0699">rRNA-binding</keyword>
<comment type="function">
    <text evidence="1">One of the essential components for the initiation of protein synthesis. Stabilizes the binding of IF-2 and IF-3 on the 30S subunit to which N-formylmethionyl-tRNA(fMet) subsequently binds. Helps modulate mRNA selection, yielding the 30S pre-initiation complex (PIC). Upon addition of the 50S ribosomal subunit IF-1, IF-2 and IF-3 are released leaving the mature 70S translation initiation complex.</text>
</comment>
<comment type="subunit">
    <text evidence="1">Component of the 30S ribosomal translation pre-initiation complex which assembles on the 30S ribosome in the order IF-2 and IF-3, IF-1 and N-formylmethionyl-tRNA(fMet); mRNA recruitment can occur at any time during PIC assembly.</text>
</comment>
<comment type="subcellular location">
    <subcellularLocation>
        <location evidence="1">Cytoplasm</location>
    </subcellularLocation>
</comment>
<comment type="similarity">
    <text evidence="1">Belongs to the IF-1 family.</text>
</comment>
<proteinExistence type="inferred from homology"/>
<name>IF1_SHIF8</name>
<sequence>MAKEDNIEMQGTVLETLPNTMFRVELENGHVVTAHISGKMRKNYIRILTGDKVTVELTPYDLSKGRIVFRSR</sequence>